<proteinExistence type="inferred from homology"/>
<sequence length="424" mass="46356">MTDKRKDGSGKLLYCSFCGKSQHEVRKLIAGPSVYICDECVDLCNDIIREEIKEVAPHRERSALPTPHEIRNHLDDYVIGQEQAKKVLAVAVYNHYKRLRNGDTSNGVELGKSNILLIGPTGSGKTLLAETLARLLDVPFTMADATTLTEAGYVGEDVENIIQKLLQKCDYDVQKAQRGIVYIDEIDKISRKSDNPSITRDVSGEGVQQALLKLIEGTVAAVPPQGGRKHPQQEFLQVDTSKILFICGGAFAGLDKVISHRVETGSGIGFGATVKAKSDKASEGELLAQVEPEDLIKFGLIPEFIGRLPVVATLNELSEEALIQILKEPKNALTKQYQALFNLEGVDLEFRDEALDAIAKKAMARKTGARGLRSIVEAALLDTMYDLPSMEDVEKVVIDESVIDGQSKPLLIYGKPEAQQASGE</sequence>
<comment type="function">
    <text evidence="1">ATP-dependent specificity component of the Clp protease. It directs the protease to specific substrates. Can perform chaperone functions in the absence of ClpP.</text>
</comment>
<comment type="subunit">
    <text evidence="1">Component of the ClpX-ClpP complex. Forms a hexameric ring that, in the presence of ATP, binds to fourteen ClpP subunits assembled into a disk-like structure with a central cavity, resembling the structure of eukaryotic proteasomes.</text>
</comment>
<comment type="similarity">
    <text evidence="1">Belongs to the ClpX chaperone family.</text>
</comment>
<feature type="chain" id="PRO_1000058337" description="ATP-dependent Clp protease ATP-binding subunit ClpX">
    <location>
        <begin position="1"/>
        <end position="424"/>
    </location>
</feature>
<feature type="domain" description="ClpX-type ZB" evidence="2">
    <location>
        <begin position="2"/>
        <end position="56"/>
    </location>
</feature>
<feature type="binding site" evidence="2">
    <location>
        <position position="15"/>
    </location>
    <ligand>
        <name>Zn(2+)</name>
        <dbReference type="ChEBI" id="CHEBI:29105"/>
    </ligand>
</feature>
<feature type="binding site" evidence="2">
    <location>
        <position position="18"/>
    </location>
    <ligand>
        <name>Zn(2+)</name>
        <dbReference type="ChEBI" id="CHEBI:29105"/>
    </ligand>
</feature>
<feature type="binding site" evidence="2">
    <location>
        <position position="37"/>
    </location>
    <ligand>
        <name>Zn(2+)</name>
        <dbReference type="ChEBI" id="CHEBI:29105"/>
    </ligand>
</feature>
<feature type="binding site" evidence="2">
    <location>
        <position position="40"/>
    </location>
    <ligand>
        <name>Zn(2+)</name>
        <dbReference type="ChEBI" id="CHEBI:29105"/>
    </ligand>
</feature>
<feature type="binding site" evidence="1">
    <location>
        <begin position="120"/>
        <end position="127"/>
    </location>
    <ligand>
        <name>ATP</name>
        <dbReference type="ChEBI" id="CHEBI:30616"/>
    </ligand>
</feature>
<protein>
    <recommendedName>
        <fullName evidence="1">ATP-dependent Clp protease ATP-binding subunit ClpX</fullName>
    </recommendedName>
</protein>
<gene>
    <name evidence="1" type="primary">clpX</name>
    <name type="ordered locus">EcE24377A_0474</name>
</gene>
<keyword id="KW-0067">ATP-binding</keyword>
<keyword id="KW-0143">Chaperone</keyword>
<keyword id="KW-0479">Metal-binding</keyword>
<keyword id="KW-0547">Nucleotide-binding</keyword>
<keyword id="KW-1185">Reference proteome</keyword>
<keyword id="KW-0862">Zinc</keyword>
<accession>A7ZIJ6</accession>
<dbReference type="EMBL" id="CP000800">
    <property type="protein sequence ID" value="ABV19393.1"/>
    <property type="molecule type" value="Genomic_DNA"/>
</dbReference>
<dbReference type="RefSeq" id="WP_000130305.1">
    <property type="nucleotide sequence ID" value="NC_009801.1"/>
</dbReference>
<dbReference type="SMR" id="A7ZIJ6"/>
<dbReference type="GeneID" id="93777016"/>
<dbReference type="KEGG" id="ecw:EcE24377A_0474"/>
<dbReference type="HOGENOM" id="CLU_014218_8_2_6"/>
<dbReference type="Proteomes" id="UP000001122">
    <property type="component" value="Chromosome"/>
</dbReference>
<dbReference type="GO" id="GO:0009376">
    <property type="term" value="C:HslUV protease complex"/>
    <property type="evidence" value="ECO:0007669"/>
    <property type="project" value="TreeGrafter"/>
</dbReference>
<dbReference type="GO" id="GO:0005524">
    <property type="term" value="F:ATP binding"/>
    <property type="evidence" value="ECO:0007669"/>
    <property type="project" value="UniProtKB-UniRule"/>
</dbReference>
<dbReference type="GO" id="GO:0016887">
    <property type="term" value="F:ATP hydrolysis activity"/>
    <property type="evidence" value="ECO:0007669"/>
    <property type="project" value="InterPro"/>
</dbReference>
<dbReference type="GO" id="GO:0140662">
    <property type="term" value="F:ATP-dependent protein folding chaperone"/>
    <property type="evidence" value="ECO:0007669"/>
    <property type="project" value="InterPro"/>
</dbReference>
<dbReference type="GO" id="GO:0046983">
    <property type="term" value="F:protein dimerization activity"/>
    <property type="evidence" value="ECO:0007669"/>
    <property type="project" value="InterPro"/>
</dbReference>
<dbReference type="GO" id="GO:0051082">
    <property type="term" value="F:unfolded protein binding"/>
    <property type="evidence" value="ECO:0007669"/>
    <property type="project" value="UniProtKB-UniRule"/>
</dbReference>
<dbReference type="GO" id="GO:0008270">
    <property type="term" value="F:zinc ion binding"/>
    <property type="evidence" value="ECO:0007669"/>
    <property type="project" value="InterPro"/>
</dbReference>
<dbReference type="GO" id="GO:0051301">
    <property type="term" value="P:cell division"/>
    <property type="evidence" value="ECO:0007669"/>
    <property type="project" value="TreeGrafter"/>
</dbReference>
<dbReference type="GO" id="GO:0051603">
    <property type="term" value="P:proteolysis involved in protein catabolic process"/>
    <property type="evidence" value="ECO:0007669"/>
    <property type="project" value="TreeGrafter"/>
</dbReference>
<dbReference type="CDD" id="cd19497">
    <property type="entry name" value="RecA-like_ClpX"/>
    <property type="match status" value="1"/>
</dbReference>
<dbReference type="FunFam" id="1.10.8.60:FF:000002">
    <property type="entry name" value="ATP-dependent Clp protease ATP-binding subunit ClpX"/>
    <property type="match status" value="1"/>
</dbReference>
<dbReference type="FunFam" id="3.40.50.300:FF:000005">
    <property type="entry name" value="ATP-dependent Clp protease ATP-binding subunit ClpX"/>
    <property type="match status" value="1"/>
</dbReference>
<dbReference type="Gene3D" id="1.10.8.60">
    <property type="match status" value="1"/>
</dbReference>
<dbReference type="Gene3D" id="6.20.220.10">
    <property type="entry name" value="ClpX chaperone, C4-type zinc finger domain"/>
    <property type="match status" value="1"/>
</dbReference>
<dbReference type="Gene3D" id="3.40.50.300">
    <property type="entry name" value="P-loop containing nucleotide triphosphate hydrolases"/>
    <property type="match status" value="1"/>
</dbReference>
<dbReference type="HAMAP" id="MF_00175">
    <property type="entry name" value="ClpX"/>
    <property type="match status" value="1"/>
</dbReference>
<dbReference type="InterPro" id="IPR003593">
    <property type="entry name" value="AAA+_ATPase"/>
</dbReference>
<dbReference type="InterPro" id="IPR050052">
    <property type="entry name" value="ATP-dep_Clp_protease_ClpX"/>
</dbReference>
<dbReference type="InterPro" id="IPR003959">
    <property type="entry name" value="ATPase_AAA_core"/>
</dbReference>
<dbReference type="InterPro" id="IPR019489">
    <property type="entry name" value="Clp_ATPase_C"/>
</dbReference>
<dbReference type="InterPro" id="IPR004487">
    <property type="entry name" value="Clp_protease_ATP-bd_su_ClpX"/>
</dbReference>
<dbReference type="InterPro" id="IPR046425">
    <property type="entry name" value="ClpX_bact"/>
</dbReference>
<dbReference type="InterPro" id="IPR027417">
    <property type="entry name" value="P-loop_NTPase"/>
</dbReference>
<dbReference type="InterPro" id="IPR010603">
    <property type="entry name" value="Znf_CppX_C4"/>
</dbReference>
<dbReference type="InterPro" id="IPR038366">
    <property type="entry name" value="Znf_CppX_C4_sf"/>
</dbReference>
<dbReference type="NCBIfam" id="TIGR00382">
    <property type="entry name" value="clpX"/>
    <property type="match status" value="1"/>
</dbReference>
<dbReference type="NCBIfam" id="NF003745">
    <property type="entry name" value="PRK05342.1"/>
    <property type="match status" value="1"/>
</dbReference>
<dbReference type="PANTHER" id="PTHR48102:SF7">
    <property type="entry name" value="ATP-DEPENDENT CLP PROTEASE ATP-BINDING SUBUNIT CLPX-LIKE, MITOCHONDRIAL"/>
    <property type="match status" value="1"/>
</dbReference>
<dbReference type="PANTHER" id="PTHR48102">
    <property type="entry name" value="ATP-DEPENDENT CLP PROTEASE ATP-BINDING SUBUNIT CLPX-LIKE, MITOCHONDRIAL-RELATED"/>
    <property type="match status" value="1"/>
</dbReference>
<dbReference type="Pfam" id="PF07724">
    <property type="entry name" value="AAA_2"/>
    <property type="match status" value="1"/>
</dbReference>
<dbReference type="Pfam" id="PF10431">
    <property type="entry name" value="ClpB_D2-small"/>
    <property type="match status" value="1"/>
</dbReference>
<dbReference type="Pfam" id="PF06689">
    <property type="entry name" value="zf-C4_ClpX"/>
    <property type="match status" value="1"/>
</dbReference>
<dbReference type="SMART" id="SM00382">
    <property type="entry name" value="AAA"/>
    <property type="match status" value="1"/>
</dbReference>
<dbReference type="SMART" id="SM01086">
    <property type="entry name" value="ClpB_D2-small"/>
    <property type="match status" value="1"/>
</dbReference>
<dbReference type="SMART" id="SM00994">
    <property type="entry name" value="zf-C4_ClpX"/>
    <property type="match status" value="1"/>
</dbReference>
<dbReference type="SUPFAM" id="SSF57716">
    <property type="entry name" value="Glucocorticoid receptor-like (DNA-binding domain)"/>
    <property type="match status" value="1"/>
</dbReference>
<dbReference type="SUPFAM" id="SSF52540">
    <property type="entry name" value="P-loop containing nucleoside triphosphate hydrolases"/>
    <property type="match status" value="1"/>
</dbReference>
<dbReference type="PROSITE" id="PS51902">
    <property type="entry name" value="CLPX_ZB"/>
    <property type="match status" value="1"/>
</dbReference>
<evidence type="ECO:0000255" key="1">
    <source>
        <dbReference type="HAMAP-Rule" id="MF_00175"/>
    </source>
</evidence>
<evidence type="ECO:0000255" key="2">
    <source>
        <dbReference type="PROSITE-ProRule" id="PRU01250"/>
    </source>
</evidence>
<reference key="1">
    <citation type="journal article" date="2008" name="J. Bacteriol.">
        <title>The pangenome structure of Escherichia coli: comparative genomic analysis of E. coli commensal and pathogenic isolates.</title>
        <authorList>
            <person name="Rasko D.A."/>
            <person name="Rosovitz M.J."/>
            <person name="Myers G.S.A."/>
            <person name="Mongodin E.F."/>
            <person name="Fricke W.F."/>
            <person name="Gajer P."/>
            <person name="Crabtree J."/>
            <person name="Sebaihia M."/>
            <person name="Thomson N.R."/>
            <person name="Chaudhuri R."/>
            <person name="Henderson I.R."/>
            <person name="Sperandio V."/>
            <person name="Ravel J."/>
        </authorList>
    </citation>
    <scope>NUCLEOTIDE SEQUENCE [LARGE SCALE GENOMIC DNA]</scope>
    <source>
        <strain>E24377A / ETEC</strain>
    </source>
</reference>
<organism>
    <name type="scientific">Escherichia coli O139:H28 (strain E24377A / ETEC)</name>
    <dbReference type="NCBI Taxonomy" id="331111"/>
    <lineage>
        <taxon>Bacteria</taxon>
        <taxon>Pseudomonadati</taxon>
        <taxon>Pseudomonadota</taxon>
        <taxon>Gammaproteobacteria</taxon>
        <taxon>Enterobacterales</taxon>
        <taxon>Enterobacteriaceae</taxon>
        <taxon>Escherichia</taxon>
    </lineage>
</organism>
<name>CLPX_ECO24</name>